<gene>
    <name evidence="1" type="primary">sucC</name>
    <name type="ordered locus">plu1432</name>
</gene>
<protein>
    <recommendedName>
        <fullName evidence="1">Succinate--CoA ligase [ADP-forming] subunit beta</fullName>
        <ecNumber evidence="1">6.2.1.5</ecNumber>
    </recommendedName>
    <alternativeName>
        <fullName evidence="1">Succinyl-CoA synthetase subunit beta</fullName>
        <shortName evidence="1">SCS-beta</shortName>
    </alternativeName>
</protein>
<reference key="1">
    <citation type="journal article" date="2003" name="Nat. Biotechnol.">
        <title>The genome sequence of the entomopathogenic bacterium Photorhabdus luminescens.</title>
        <authorList>
            <person name="Duchaud E."/>
            <person name="Rusniok C."/>
            <person name="Frangeul L."/>
            <person name="Buchrieser C."/>
            <person name="Givaudan A."/>
            <person name="Taourit S."/>
            <person name="Bocs S."/>
            <person name="Boursaux-Eude C."/>
            <person name="Chandler M."/>
            <person name="Charles J.-F."/>
            <person name="Dassa E."/>
            <person name="Derose R."/>
            <person name="Derzelle S."/>
            <person name="Freyssinet G."/>
            <person name="Gaudriault S."/>
            <person name="Medigue C."/>
            <person name="Lanois A."/>
            <person name="Powell K."/>
            <person name="Siguier P."/>
            <person name="Vincent R."/>
            <person name="Wingate V."/>
            <person name="Zouine M."/>
            <person name="Glaser P."/>
            <person name="Boemare N."/>
            <person name="Danchin A."/>
            <person name="Kunst F."/>
        </authorList>
    </citation>
    <scope>NUCLEOTIDE SEQUENCE [LARGE SCALE GENOMIC DNA]</scope>
    <source>
        <strain>DSM 15139 / CIP 105565 / TT01</strain>
    </source>
</reference>
<sequence length="388" mass="41306">MNLHEYQAKQLFARYGLPAPAGYACTTPREAEEAASKIGSGPWVVKCQVHAGGRGKAGGVKVVNSKEEIRAFAEQWLGKRLVTYQTDAQGQPVRQILVEAATDIAKELYLGAVVDRGTRRVVFMASTEGGVEIEKVAEETPELIHKAIIDPLIGPMSYQGRELAFKLGLTGKQVSQFTKIFLGLANLFLERDLALVEINPLVITTQGDLICLDGKLGADGNALFRQAELREMHDPSQEDPREAQAAQWELNYVALDGNIGCMVNGAGLAMGTMDIVKLHGGAPANFLDVGGGATKERVTEAFKIILSDENVKAVLVNIFGGIVRCDLIADGIIGAVEEVGVHVPVVVRLEGNNAELGAKKLADSGLNIIAATSLTDAAKQAVAAVEAK</sequence>
<organism>
    <name type="scientific">Photorhabdus laumondii subsp. laumondii (strain DSM 15139 / CIP 105565 / TT01)</name>
    <name type="common">Photorhabdus luminescens subsp. laumondii</name>
    <dbReference type="NCBI Taxonomy" id="243265"/>
    <lineage>
        <taxon>Bacteria</taxon>
        <taxon>Pseudomonadati</taxon>
        <taxon>Pseudomonadota</taxon>
        <taxon>Gammaproteobacteria</taxon>
        <taxon>Enterobacterales</taxon>
        <taxon>Morganellaceae</taxon>
        <taxon>Photorhabdus</taxon>
    </lineage>
</organism>
<dbReference type="EC" id="6.2.1.5" evidence="1"/>
<dbReference type="EMBL" id="BX571863">
    <property type="protein sequence ID" value="CAE13725.1"/>
    <property type="molecule type" value="Genomic_DNA"/>
</dbReference>
<dbReference type="RefSeq" id="WP_011145737.1">
    <property type="nucleotide sequence ID" value="NC_005126.1"/>
</dbReference>
<dbReference type="SMR" id="Q7N6V5"/>
<dbReference type="STRING" id="243265.plu1432"/>
<dbReference type="GeneID" id="48847720"/>
<dbReference type="KEGG" id="plu:plu1432"/>
<dbReference type="eggNOG" id="COG0045">
    <property type="taxonomic scope" value="Bacteria"/>
</dbReference>
<dbReference type="HOGENOM" id="CLU_037430_0_2_6"/>
<dbReference type="OrthoDB" id="9802602at2"/>
<dbReference type="UniPathway" id="UPA00223">
    <property type="reaction ID" value="UER00999"/>
</dbReference>
<dbReference type="Proteomes" id="UP000002514">
    <property type="component" value="Chromosome"/>
</dbReference>
<dbReference type="GO" id="GO:0005829">
    <property type="term" value="C:cytosol"/>
    <property type="evidence" value="ECO:0007669"/>
    <property type="project" value="TreeGrafter"/>
</dbReference>
<dbReference type="GO" id="GO:0042709">
    <property type="term" value="C:succinate-CoA ligase complex"/>
    <property type="evidence" value="ECO:0007669"/>
    <property type="project" value="TreeGrafter"/>
</dbReference>
<dbReference type="GO" id="GO:0005524">
    <property type="term" value="F:ATP binding"/>
    <property type="evidence" value="ECO:0007669"/>
    <property type="project" value="UniProtKB-UniRule"/>
</dbReference>
<dbReference type="GO" id="GO:0000287">
    <property type="term" value="F:magnesium ion binding"/>
    <property type="evidence" value="ECO:0007669"/>
    <property type="project" value="UniProtKB-UniRule"/>
</dbReference>
<dbReference type="GO" id="GO:0004775">
    <property type="term" value="F:succinate-CoA ligase (ADP-forming) activity"/>
    <property type="evidence" value="ECO:0007669"/>
    <property type="project" value="UniProtKB-UniRule"/>
</dbReference>
<dbReference type="GO" id="GO:0004776">
    <property type="term" value="F:succinate-CoA ligase (GDP-forming) activity"/>
    <property type="evidence" value="ECO:0007669"/>
    <property type="project" value="RHEA"/>
</dbReference>
<dbReference type="GO" id="GO:0006104">
    <property type="term" value="P:succinyl-CoA metabolic process"/>
    <property type="evidence" value="ECO:0007669"/>
    <property type="project" value="TreeGrafter"/>
</dbReference>
<dbReference type="GO" id="GO:0006099">
    <property type="term" value="P:tricarboxylic acid cycle"/>
    <property type="evidence" value="ECO:0007669"/>
    <property type="project" value="UniProtKB-UniRule"/>
</dbReference>
<dbReference type="FunFam" id="3.30.1490.20:FF:000002">
    <property type="entry name" value="Succinate--CoA ligase [ADP-forming] subunit beta"/>
    <property type="match status" value="1"/>
</dbReference>
<dbReference type="FunFam" id="3.30.470.20:FF:000002">
    <property type="entry name" value="Succinate--CoA ligase [ADP-forming] subunit beta"/>
    <property type="match status" value="1"/>
</dbReference>
<dbReference type="FunFam" id="3.40.50.261:FF:000001">
    <property type="entry name" value="Succinate--CoA ligase [ADP-forming] subunit beta"/>
    <property type="match status" value="1"/>
</dbReference>
<dbReference type="Gene3D" id="3.30.1490.20">
    <property type="entry name" value="ATP-grasp fold, A domain"/>
    <property type="match status" value="1"/>
</dbReference>
<dbReference type="Gene3D" id="3.30.470.20">
    <property type="entry name" value="ATP-grasp fold, B domain"/>
    <property type="match status" value="1"/>
</dbReference>
<dbReference type="Gene3D" id="3.40.50.261">
    <property type="entry name" value="Succinyl-CoA synthetase domains"/>
    <property type="match status" value="1"/>
</dbReference>
<dbReference type="HAMAP" id="MF_00558">
    <property type="entry name" value="Succ_CoA_beta"/>
    <property type="match status" value="1"/>
</dbReference>
<dbReference type="InterPro" id="IPR011761">
    <property type="entry name" value="ATP-grasp"/>
</dbReference>
<dbReference type="InterPro" id="IPR013650">
    <property type="entry name" value="ATP-grasp_succ-CoA_synth-type"/>
</dbReference>
<dbReference type="InterPro" id="IPR013815">
    <property type="entry name" value="ATP_grasp_subdomain_1"/>
</dbReference>
<dbReference type="InterPro" id="IPR017866">
    <property type="entry name" value="Succ-CoA_synthase_bsu_CS"/>
</dbReference>
<dbReference type="InterPro" id="IPR005811">
    <property type="entry name" value="SUCC_ACL_C"/>
</dbReference>
<dbReference type="InterPro" id="IPR005809">
    <property type="entry name" value="Succ_CoA_ligase-like_bsu"/>
</dbReference>
<dbReference type="InterPro" id="IPR016102">
    <property type="entry name" value="Succinyl-CoA_synth-like"/>
</dbReference>
<dbReference type="NCBIfam" id="NF001913">
    <property type="entry name" value="PRK00696.1"/>
    <property type="match status" value="1"/>
</dbReference>
<dbReference type="NCBIfam" id="TIGR01016">
    <property type="entry name" value="sucCoAbeta"/>
    <property type="match status" value="1"/>
</dbReference>
<dbReference type="PANTHER" id="PTHR11815:SF10">
    <property type="entry name" value="SUCCINATE--COA LIGASE [GDP-FORMING] SUBUNIT BETA, MITOCHONDRIAL"/>
    <property type="match status" value="1"/>
</dbReference>
<dbReference type="PANTHER" id="PTHR11815">
    <property type="entry name" value="SUCCINYL-COA SYNTHETASE BETA CHAIN"/>
    <property type="match status" value="1"/>
</dbReference>
<dbReference type="Pfam" id="PF08442">
    <property type="entry name" value="ATP-grasp_2"/>
    <property type="match status" value="1"/>
</dbReference>
<dbReference type="Pfam" id="PF00549">
    <property type="entry name" value="Ligase_CoA"/>
    <property type="match status" value="1"/>
</dbReference>
<dbReference type="PIRSF" id="PIRSF001554">
    <property type="entry name" value="SucCS_beta"/>
    <property type="match status" value="1"/>
</dbReference>
<dbReference type="SUPFAM" id="SSF56059">
    <property type="entry name" value="Glutathione synthetase ATP-binding domain-like"/>
    <property type="match status" value="1"/>
</dbReference>
<dbReference type="SUPFAM" id="SSF52210">
    <property type="entry name" value="Succinyl-CoA synthetase domains"/>
    <property type="match status" value="1"/>
</dbReference>
<dbReference type="PROSITE" id="PS50975">
    <property type="entry name" value="ATP_GRASP"/>
    <property type="match status" value="1"/>
</dbReference>
<dbReference type="PROSITE" id="PS01217">
    <property type="entry name" value="SUCCINYL_COA_LIG_3"/>
    <property type="match status" value="1"/>
</dbReference>
<accession>Q7N6V5</accession>
<keyword id="KW-0067">ATP-binding</keyword>
<keyword id="KW-0436">Ligase</keyword>
<keyword id="KW-0460">Magnesium</keyword>
<keyword id="KW-0479">Metal-binding</keyword>
<keyword id="KW-0547">Nucleotide-binding</keyword>
<keyword id="KW-1185">Reference proteome</keyword>
<keyword id="KW-0816">Tricarboxylic acid cycle</keyword>
<feature type="chain" id="PRO_1000082156" description="Succinate--CoA ligase [ADP-forming] subunit beta">
    <location>
        <begin position="1"/>
        <end position="388"/>
    </location>
</feature>
<feature type="domain" description="ATP-grasp" evidence="1">
    <location>
        <begin position="9"/>
        <end position="244"/>
    </location>
</feature>
<feature type="binding site" evidence="1">
    <location>
        <position position="46"/>
    </location>
    <ligand>
        <name>ATP</name>
        <dbReference type="ChEBI" id="CHEBI:30616"/>
    </ligand>
</feature>
<feature type="binding site" evidence="1">
    <location>
        <begin position="53"/>
        <end position="55"/>
    </location>
    <ligand>
        <name>ATP</name>
        <dbReference type="ChEBI" id="CHEBI:30616"/>
    </ligand>
</feature>
<feature type="binding site" evidence="1">
    <location>
        <position position="99"/>
    </location>
    <ligand>
        <name>ATP</name>
        <dbReference type="ChEBI" id="CHEBI:30616"/>
    </ligand>
</feature>
<feature type="binding site" evidence="1">
    <location>
        <position position="102"/>
    </location>
    <ligand>
        <name>ATP</name>
        <dbReference type="ChEBI" id="CHEBI:30616"/>
    </ligand>
</feature>
<feature type="binding site" evidence="1">
    <location>
        <position position="107"/>
    </location>
    <ligand>
        <name>ATP</name>
        <dbReference type="ChEBI" id="CHEBI:30616"/>
    </ligand>
</feature>
<feature type="binding site" evidence="1">
    <location>
        <position position="199"/>
    </location>
    <ligand>
        <name>Mg(2+)</name>
        <dbReference type="ChEBI" id="CHEBI:18420"/>
    </ligand>
</feature>
<feature type="binding site" evidence="1">
    <location>
        <position position="213"/>
    </location>
    <ligand>
        <name>Mg(2+)</name>
        <dbReference type="ChEBI" id="CHEBI:18420"/>
    </ligand>
</feature>
<feature type="binding site" evidence="1">
    <location>
        <position position="264"/>
    </location>
    <ligand>
        <name>substrate</name>
        <note>ligand shared with subunit alpha</note>
    </ligand>
</feature>
<feature type="binding site" evidence="1">
    <location>
        <begin position="321"/>
        <end position="323"/>
    </location>
    <ligand>
        <name>substrate</name>
        <note>ligand shared with subunit alpha</note>
    </ligand>
</feature>
<evidence type="ECO:0000255" key="1">
    <source>
        <dbReference type="HAMAP-Rule" id="MF_00558"/>
    </source>
</evidence>
<name>SUCC_PHOLL</name>
<proteinExistence type="inferred from homology"/>
<comment type="function">
    <text evidence="1">Succinyl-CoA synthetase functions in the citric acid cycle (TCA), coupling the hydrolysis of succinyl-CoA to the synthesis of either ATP or GTP and thus represents the only step of substrate-level phosphorylation in the TCA. The beta subunit provides nucleotide specificity of the enzyme and binds the substrate succinate, while the binding sites for coenzyme A and phosphate are found in the alpha subunit.</text>
</comment>
<comment type="catalytic activity">
    <reaction evidence="1">
        <text>succinate + ATP + CoA = succinyl-CoA + ADP + phosphate</text>
        <dbReference type="Rhea" id="RHEA:17661"/>
        <dbReference type="ChEBI" id="CHEBI:30031"/>
        <dbReference type="ChEBI" id="CHEBI:30616"/>
        <dbReference type="ChEBI" id="CHEBI:43474"/>
        <dbReference type="ChEBI" id="CHEBI:57287"/>
        <dbReference type="ChEBI" id="CHEBI:57292"/>
        <dbReference type="ChEBI" id="CHEBI:456216"/>
        <dbReference type="EC" id="6.2.1.5"/>
    </reaction>
    <physiologicalReaction direction="right-to-left" evidence="1">
        <dbReference type="Rhea" id="RHEA:17663"/>
    </physiologicalReaction>
</comment>
<comment type="catalytic activity">
    <reaction evidence="1">
        <text>GTP + succinate + CoA = succinyl-CoA + GDP + phosphate</text>
        <dbReference type="Rhea" id="RHEA:22120"/>
        <dbReference type="ChEBI" id="CHEBI:30031"/>
        <dbReference type="ChEBI" id="CHEBI:37565"/>
        <dbReference type="ChEBI" id="CHEBI:43474"/>
        <dbReference type="ChEBI" id="CHEBI:57287"/>
        <dbReference type="ChEBI" id="CHEBI:57292"/>
        <dbReference type="ChEBI" id="CHEBI:58189"/>
    </reaction>
    <physiologicalReaction direction="right-to-left" evidence="1">
        <dbReference type="Rhea" id="RHEA:22122"/>
    </physiologicalReaction>
</comment>
<comment type="cofactor">
    <cofactor evidence="1">
        <name>Mg(2+)</name>
        <dbReference type="ChEBI" id="CHEBI:18420"/>
    </cofactor>
    <text evidence="1">Binds 1 Mg(2+) ion per subunit.</text>
</comment>
<comment type="pathway">
    <text evidence="1">Carbohydrate metabolism; tricarboxylic acid cycle; succinate from succinyl-CoA (ligase route): step 1/1.</text>
</comment>
<comment type="subunit">
    <text evidence="1">Heterotetramer of two alpha and two beta subunits.</text>
</comment>
<comment type="similarity">
    <text evidence="1">Belongs to the succinate/malate CoA ligase beta subunit family.</text>
</comment>